<evidence type="ECO:0000250" key="1">
    <source>
        <dbReference type="UniProtKB" id="A0A059TC02"/>
    </source>
</evidence>
<evidence type="ECO:0000255" key="2"/>
<evidence type="ECO:0000269" key="3">
    <source>
    </source>
</evidence>
<evidence type="ECO:0000269" key="4">
    <source>
    </source>
</evidence>
<evidence type="ECO:0000269" key="5">
    <source>
    </source>
</evidence>
<evidence type="ECO:0000305" key="6"/>
<evidence type="ECO:0007829" key="7">
    <source>
        <dbReference type="PDB" id="2P4H"/>
    </source>
</evidence>
<proteinExistence type="evidence at protein level"/>
<protein>
    <recommendedName>
        <fullName>Vestitone reductase</fullName>
        <ecNumber evidence="3 5">1.1.1.348</ecNumber>
    </recommendedName>
</protein>
<keyword id="KW-0002">3D-structure</keyword>
<keyword id="KW-0903">Direct protein sequencing</keyword>
<keyword id="KW-0284">Flavonoid biosynthesis</keyword>
<keyword id="KW-0521">NADP</keyword>
<keyword id="KW-0560">Oxidoreductase</keyword>
<keyword id="KW-0611">Plant defense</keyword>
<feature type="chain" id="PRO_0000424198" description="Vestitone reductase">
    <location>
        <begin position="1"/>
        <end position="326"/>
    </location>
</feature>
<feature type="binding site" evidence="2">
    <location>
        <begin position="12"/>
        <end position="18"/>
    </location>
    <ligand>
        <name>NADP(+)</name>
        <dbReference type="ChEBI" id="CHEBI:58349"/>
    </ligand>
</feature>
<feature type="binding site" evidence="2">
    <location>
        <position position="37"/>
    </location>
    <ligand>
        <name>NADP(+)</name>
        <dbReference type="ChEBI" id="CHEBI:58349"/>
    </ligand>
</feature>
<feature type="binding site" evidence="1">
    <location>
        <position position="164"/>
    </location>
    <ligand>
        <name>NADP(+)</name>
        <dbReference type="ChEBI" id="CHEBI:58349"/>
    </ligand>
</feature>
<feature type="strand" evidence="7">
    <location>
        <begin position="7"/>
        <end position="12"/>
    </location>
</feature>
<feature type="helix" evidence="7">
    <location>
        <begin position="16"/>
        <end position="27"/>
    </location>
</feature>
<feature type="strand" evidence="7">
    <location>
        <begin position="31"/>
        <end position="35"/>
    </location>
</feature>
<feature type="helix" evidence="7">
    <location>
        <begin position="47"/>
        <end position="50"/>
    </location>
</feature>
<feature type="helix" evidence="7">
    <location>
        <begin position="55"/>
        <end position="58"/>
    </location>
</feature>
<feature type="strand" evidence="7">
    <location>
        <begin position="59"/>
        <end position="61"/>
    </location>
</feature>
<feature type="helix" evidence="7">
    <location>
        <begin position="69"/>
        <end position="72"/>
    </location>
</feature>
<feature type="helix" evidence="7">
    <location>
        <begin position="73"/>
        <end position="76"/>
    </location>
</feature>
<feature type="strand" evidence="7">
    <location>
        <begin position="80"/>
        <end position="84"/>
    </location>
</feature>
<feature type="helix" evidence="7">
    <location>
        <begin position="99"/>
        <end position="115"/>
    </location>
</feature>
<feature type="strand" evidence="7">
    <location>
        <begin position="123"/>
        <end position="129"/>
    </location>
</feature>
<feature type="helix" evidence="7">
    <location>
        <begin position="130"/>
        <end position="132"/>
    </location>
</feature>
<feature type="strand" evidence="7">
    <location>
        <begin position="136"/>
        <end position="138"/>
    </location>
</feature>
<feature type="strand" evidence="7">
    <location>
        <begin position="141"/>
        <end position="143"/>
    </location>
</feature>
<feature type="helix" evidence="7">
    <location>
        <begin position="151"/>
        <end position="157"/>
    </location>
</feature>
<feature type="helix" evidence="7">
    <location>
        <begin position="162"/>
        <end position="181"/>
    </location>
</feature>
<feature type="strand" evidence="7">
    <location>
        <begin position="186"/>
        <end position="191"/>
    </location>
</feature>
<feature type="strand" evidence="7">
    <location>
        <begin position="193"/>
        <end position="196"/>
    </location>
</feature>
<feature type="strand" evidence="7">
    <location>
        <begin position="200"/>
        <end position="202"/>
    </location>
</feature>
<feature type="helix" evidence="7">
    <location>
        <begin position="205"/>
        <end position="210"/>
    </location>
</feature>
<feature type="helix" evidence="7">
    <location>
        <begin position="212"/>
        <end position="215"/>
    </location>
</feature>
<feature type="helix" evidence="7">
    <location>
        <begin position="218"/>
        <end position="220"/>
    </location>
</feature>
<feature type="strand" evidence="7">
    <location>
        <begin position="223"/>
        <end position="230"/>
    </location>
</feature>
<feature type="helix" evidence="7">
    <location>
        <begin position="231"/>
        <end position="243"/>
    </location>
</feature>
<feature type="strand" evidence="7">
    <location>
        <begin position="249"/>
        <end position="252"/>
    </location>
</feature>
<feature type="strand" evidence="7">
    <location>
        <begin position="256"/>
        <end position="259"/>
    </location>
</feature>
<feature type="helix" evidence="7">
    <location>
        <begin position="260"/>
        <end position="270"/>
    </location>
</feature>
<feature type="turn" evidence="7">
    <location>
        <begin position="279"/>
        <end position="284"/>
    </location>
</feature>
<feature type="helix" evidence="7">
    <location>
        <begin position="296"/>
        <end position="300"/>
    </location>
</feature>
<feature type="helix" evidence="7">
    <location>
        <begin position="309"/>
        <end position="322"/>
    </location>
</feature>
<dbReference type="EC" id="1.1.1.348" evidence="3 5"/>
<dbReference type="EMBL" id="U28213">
    <property type="protein sequence ID" value="AAB41550.1"/>
    <property type="molecule type" value="mRNA"/>
</dbReference>
<dbReference type="PIR" id="S66262">
    <property type="entry name" value="S66262"/>
</dbReference>
<dbReference type="PDB" id="2P4H">
    <property type="method" value="X-ray"/>
    <property type="resolution" value="1.40 A"/>
    <property type="chains" value="X=5-326"/>
</dbReference>
<dbReference type="PDBsum" id="2P4H"/>
<dbReference type="SMR" id="Q40316"/>
<dbReference type="KEGG" id="ag:AAB41550"/>
<dbReference type="BioCyc" id="MetaCyc:MONOMER-5044"/>
<dbReference type="EvolutionaryTrace" id="Q40316"/>
<dbReference type="GO" id="GO:0140860">
    <property type="term" value="F:(3R)-2'-hydroxyisoflavanone reductase activity"/>
    <property type="evidence" value="ECO:0007669"/>
    <property type="project" value="RHEA"/>
</dbReference>
<dbReference type="GO" id="GO:0006952">
    <property type="term" value="P:defense response"/>
    <property type="evidence" value="ECO:0007669"/>
    <property type="project" value="UniProtKB-KW"/>
</dbReference>
<dbReference type="GO" id="GO:0009813">
    <property type="term" value="P:flavonoid biosynthetic process"/>
    <property type="evidence" value="ECO:0007669"/>
    <property type="project" value="UniProtKB-KW"/>
</dbReference>
<dbReference type="CDD" id="cd08958">
    <property type="entry name" value="FR_SDR_e"/>
    <property type="match status" value="1"/>
</dbReference>
<dbReference type="FunFam" id="3.40.50.720:FF:000085">
    <property type="entry name" value="Dihydroflavonol reductase"/>
    <property type="match status" value="1"/>
</dbReference>
<dbReference type="Gene3D" id="3.40.50.720">
    <property type="entry name" value="NAD(P)-binding Rossmann-like Domain"/>
    <property type="match status" value="1"/>
</dbReference>
<dbReference type="InterPro" id="IPR001509">
    <property type="entry name" value="Epimerase_deHydtase"/>
</dbReference>
<dbReference type="InterPro" id="IPR036291">
    <property type="entry name" value="NAD(P)-bd_dom_sf"/>
</dbReference>
<dbReference type="InterPro" id="IPR050425">
    <property type="entry name" value="NAD(P)_dehydrat-like"/>
</dbReference>
<dbReference type="PANTHER" id="PTHR10366:SF617">
    <property type="entry name" value="DIHYDROFLAVONOL 4-REDUCTASE-LIKE PROTEIN"/>
    <property type="match status" value="1"/>
</dbReference>
<dbReference type="PANTHER" id="PTHR10366">
    <property type="entry name" value="NAD DEPENDENT EPIMERASE/DEHYDRATASE"/>
    <property type="match status" value="1"/>
</dbReference>
<dbReference type="Pfam" id="PF01370">
    <property type="entry name" value="Epimerase"/>
    <property type="match status" value="1"/>
</dbReference>
<dbReference type="SUPFAM" id="SSF51735">
    <property type="entry name" value="NAD(P)-binding Rossmann-fold domains"/>
    <property type="match status" value="1"/>
</dbReference>
<reference key="1">
    <citation type="journal article" date="1995" name="Arch. Biochem. Biophys.">
        <title>Molecular cloning and expression of alfalfa (Medicago sativa L.) vestitone reductase, the penultimate enzyme in medicarpin biosynthesis.</title>
        <authorList>
            <person name="Guo L."/>
            <person name="Paiva N.L."/>
        </authorList>
    </citation>
    <scope>NUCLEOTIDE SEQUENCE [MRNA]</scope>
    <scope>PARTIAL PROTEIN SEQUENCE</scope>
    <scope>FUNCTION</scope>
    <scope>CATALYTIC ACTIVITY</scope>
    <scope>INDUCTION</scope>
    <scope>TISSUE SPECIFICITY</scope>
</reference>
<reference key="2">
    <citation type="journal article" date="1994" name="FEBS Lett.">
        <title>The 'pterocarpan synthase' of alfalfa: association and co-induction of vestitone reductase and 7,2'-dihydroxy-4'-methoxy-isoflavanol (DMI) dehydratase, the two final enzymes in medicarpin biosynthesis.</title>
        <authorList>
            <person name="Guo L."/>
            <person name="Dixon R.A."/>
            <person name="Paiva N.L."/>
        </authorList>
    </citation>
    <scope>FUNCTION</scope>
</reference>
<reference key="3">
    <citation type="journal article" date="1994" name="J. Biol. Chem.">
        <title>Conversion of vestitone to medicarpin in alfalfa (Medicago sativa L.) is catalyzed by two independent enzymes. Identification, purification, and characterization of vestitone reductase and 7,2'-dihydroxy-4'-methoxyisoflavanol dehydratase.</title>
        <authorList>
            <person name="Guo L."/>
            <person name="Dixon R.A."/>
            <person name="Paiva N.L."/>
        </authorList>
    </citation>
    <scope>FUNCTION</scope>
    <scope>CATALYTIC ACTIVITY</scope>
    <scope>BIOPHYSICOCHEMICAL PROPERTIES</scope>
    <scope>ACTIVITY REGULATION</scope>
    <scope>SUBUNIT</scope>
</reference>
<reference key="4">
    <citation type="journal article" date="2007" name="J. Mol. Biol.">
        <title>Crystal structure of vestitone reductase from alfalfa (Medicago sativa L.).</title>
        <authorList>
            <person name="Shao H."/>
            <person name="Dixon R.A."/>
            <person name="Wang X."/>
        </authorList>
    </citation>
    <scope>X-RAY CRYSTALLOGRAPHY (1.40 ANGSTROMS) OF 5-326</scope>
    <scope>PREDICTED NADP BINDING SITES</scope>
</reference>
<sequence length="326" mass="35918">MAEGKGRVCVTGGTGFLGSWIIKSLLENGYSVNTTIRADPERKRDVSFLTNLPGASEKLHFFNADLSNPDSFAAAIEGCVGIFHTASPIDFAVSEPEEIVTKRTVDGALGILKACVNSKTVKRFIYTSSGSAVSFNGKDKDVLDESDWSDVDLLRSVKPFGWNYAVSKTLAEKAVLEFGEQNGIDVVTLILPFIVGRFVCPKLPDSIEKALVLVLGKKEQIGVTRFHMVHVDDVARAHIYLLENSVPGGRYNCSPFIVPIEEMSQLLSAKYPEYQILTVDELKEIKGARLPDLNTKKLVDAGFDFKYTIEDMFDDAIQCCKEKGYL</sequence>
<organism>
    <name type="scientific">Medicago sativa</name>
    <name type="common">Alfalfa</name>
    <dbReference type="NCBI Taxonomy" id="3879"/>
    <lineage>
        <taxon>Eukaryota</taxon>
        <taxon>Viridiplantae</taxon>
        <taxon>Streptophyta</taxon>
        <taxon>Embryophyta</taxon>
        <taxon>Tracheophyta</taxon>
        <taxon>Spermatophyta</taxon>
        <taxon>Magnoliopsida</taxon>
        <taxon>eudicotyledons</taxon>
        <taxon>Gunneridae</taxon>
        <taxon>Pentapetalae</taxon>
        <taxon>rosids</taxon>
        <taxon>fabids</taxon>
        <taxon>Fabales</taxon>
        <taxon>Fabaceae</taxon>
        <taxon>Papilionoideae</taxon>
        <taxon>50 kb inversion clade</taxon>
        <taxon>NPAAA clade</taxon>
        <taxon>Hologalegina</taxon>
        <taxon>IRL clade</taxon>
        <taxon>Trifolieae</taxon>
        <taxon>Medicago</taxon>
    </lineage>
</organism>
<accession>Q40316</accession>
<comment type="function">
    <text evidence="3 4 5">Stereospecific enzyme that catalyzes the NADPH-dependent reduction of (3R)-vestitone to (3R,4R)-4'-methoxyisoflavan-2',4,7-triol (DMI). Has no activity with (3S)-vestitone. Catalyzes the penultimate step in the biosynthesis of the phytoalexin medicarpin, and thereby contributes to plant defense reactions.</text>
</comment>
<comment type="catalytic activity">
    <reaction evidence="3 5">
        <text>a (3R,4R)-4,2'-dihydroxyisoflavan + NADP(+) = a (3R)-2'-hydroxyisoflavanone + NADPH + H(+)</text>
        <dbReference type="Rhea" id="RHEA:56284"/>
        <dbReference type="ChEBI" id="CHEBI:15378"/>
        <dbReference type="ChEBI" id="CHEBI:57783"/>
        <dbReference type="ChEBI" id="CHEBI:58349"/>
        <dbReference type="ChEBI" id="CHEBI:140181"/>
        <dbReference type="ChEBI" id="CHEBI:140183"/>
        <dbReference type="EC" id="1.1.1.348"/>
    </reaction>
</comment>
<comment type="activity regulation">
    <text evidence="5">Inhibited by vestitone concentrations above 50 uM.</text>
</comment>
<comment type="biophysicochemical properties">
    <kinetics>
        <KM evidence="5">40 uM for vestitone</KM>
    </kinetics>
    <phDependence>
        <text evidence="5">Optimum pH is 6.0.</text>
    </phDependence>
    <temperatureDependence>
        <text evidence="5">Optimum temperature is 30 degrees Celsius.</text>
    </temperatureDependence>
</comment>
<comment type="subunit">
    <text evidence="5">Monomer.</text>
</comment>
<comment type="tissue specificity">
    <text evidence="3">Detected in roots, and at lower levels in root nodules. Not detected in petioles, leaf and stem.</text>
</comment>
<comment type="induction">
    <text evidence="3">Transiently up-regulated by fungal elicitors, peaking 6 hours after elicitor treatment.</text>
</comment>
<comment type="similarity">
    <text evidence="6">Belongs to the NAD(P)-dependent epimerase/dehydratase family. Dihydroflavonol-4-reductase subfamily.</text>
</comment>
<name>VESTR_MEDSA</name>